<name>3SA1_NAJKA</name>
<feature type="chain" id="PRO_0000399989" description="Cytotoxin 1" evidence="2">
    <location>
        <begin position="1"/>
        <end position="60"/>
    </location>
</feature>
<feature type="disulfide bond" evidence="1">
    <location>
        <begin position="3"/>
        <end position="21"/>
    </location>
</feature>
<feature type="disulfide bond" evidence="1">
    <location>
        <begin position="14"/>
        <end position="38"/>
    </location>
</feature>
<feature type="disulfide bond" evidence="1">
    <location>
        <begin position="42"/>
        <end position="53"/>
    </location>
</feature>
<feature type="disulfide bond" evidence="1">
    <location>
        <begin position="54"/>
        <end position="59"/>
    </location>
</feature>
<organism>
    <name type="scientific">Naja kaouthia</name>
    <name type="common">Monocled cobra</name>
    <name type="synonym">Naja siamensis</name>
    <dbReference type="NCBI Taxonomy" id="8649"/>
    <lineage>
        <taxon>Eukaryota</taxon>
        <taxon>Metazoa</taxon>
        <taxon>Chordata</taxon>
        <taxon>Craniata</taxon>
        <taxon>Vertebrata</taxon>
        <taxon>Euteleostomi</taxon>
        <taxon>Lepidosauria</taxon>
        <taxon>Squamata</taxon>
        <taxon>Bifurcata</taxon>
        <taxon>Unidentata</taxon>
        <taxon>Episquamata</taxon>
        <taxon>Toxicofera</taxon>
        <taxon>Serpentes</taxon>
        <taxon>Colubroidea</taxon>
        <taxon>Elapidae</taxon>
        <taxon>Elapinae</taxon>
        <taxon>Naja</taxon>
    </lineage>
</organism>
<accession>P0CH80</accession>
<reference key="1">
    <citation type="journal article" date="2010" name="Toxicon">
        <title>A lethal cardiotoxic-cytotoxic protein from the Indian monocellate cobra (Naja kaouthia) venom.</title>
        <authorList>
            <person name="Debnath A."/>
            <person name="Saha A."/>
            <person name="Gomes A."/>
            <person name="Biswas S."/>
            <person name="Chakrabarti P."/>
            <person name="Giri B."/>
            <person name="Biswas A.K."/>
            <person name="Gupta S.D."/>
            <person name="Gomes A."/>
        </authorList>
    </citation>
    <scope>PROTEIN SEQUENCE</scope>
    <scope>FUNCTION</scope>
    <scope>TOXIC DOSE</scope>
    <scope>IDENTIFICATION BY MASS SPECTROMETRY</scope>
    <scope>SUBCELLULAR LOCATION</scope>
    <source>
        <tissue>Venom</tissue>
    </source>
</reference>
<proteinExistence type="evidence at protein level"/>
<keyword id="KW-0123">Cardiotoxin</keyword>
<keyword id="KW-0204">Cytolysis</keyword>
<keyword id="KW-0903">Direct protein sequencing</keyword>
<keyword id="KW-1015">Disulfide bond</keyword>
<keyword id="KW-0472">Membrane</keyword>
<keyword id="KW-0964">Secreted</keyword>
<keyword id="KW-1052">Target cell membrane</keyword>
<keyword id="KW-1053">Target membrane</keyword>
<keyword id="KW-0800">Toxin</keyword>
<comment type="function">
    <text evidence="2">Produces complete blockade of auricular contraction, which is irreversible at high concentrations. Induces apoptosis in leukemic cells. Possesses anti-arthritic and anti-inflammatory potential.</text>
</comment>
<comment type="subunit">
    <text evidence="1">Monomer in solution; Homodimer and oligomer in the presence of negatively charged lipids forming a pore with a size ranging between 20 and 30 Angstroms.</text>
</comment>
<comment type="subcellular location">
    <subcellularLocation>
        <location evidence="2">Secreted</location>
    </subcellularLocation>
    <subcellularLocation>
        <location evidence="1">Target cell membrane</location>
    </subcellularLocation>
</comment>
<comment type="tissue specificity">
    <text evidence="4">Expressed by the venom gland.</text>
</comment>
<comment type="toxic dose">
    <text evidence="2">LD(50) is 2.5 mg/kg by intraperitoneal injection into mice.</text>
</comment>
<comment type="miscellaneous">
    <text evidence="4">Is classified as a S-type cytotoxin, since a serine residue stands at position 28 (Ser-29 in standard classification).</text>
</comment>
<comment type="similarity">
    <text evidence="4">Belongs to the three-finger toxin family. Short-chain subfamily. Type IA cytotoxin sub-subfamily.</text>
</comment>
<protein>
    <recommendedName>
        <fullName>Cytotoxin 1</fullName>
        <shortName evidence="3">NK-CT1</shortName>
    </recommendedName>
</protein>
<sequence length="60" mass="6807">LKCNKLVPLFYKTCPAGKNLCYKMFMVSNKTVPVKRGCIDVCPKNSLVLKYVCCNTDRCN</sequence>
<dbReference type="SMR" id="P0CH80"/>
<dbReference type="GO" id="GO:0005576">
    <property type="term" value="C:extracellular region"/>
    <property type="evidence" value="ECO:0007669"/>
    <property type="project" value="UniProtKB-SubCell"/>
</dbReference>
<dbReference type="GO" id="GO:0016020">
    <property type="term" value="C:membrane"/>
    <property type="evidence" value="ECO:0007669"/>
    <property type="project" value="UniProtKB-KW"/>
</dbReference>
<dbReference type="GO" id="GO:0044218">
    <property type="term" value="C:other organism cell membrane"/>
    <property type="evidence" value="ECO:0007669"/>
    <property type="project" value="UniProtKB-KW"/>
</dbReference>
<dbReference type="GO" id="GO:0090729">
    <property type="term" value="F:toxin activity"/>
    <property type="evidence" value="ECO:0007669"/>
    <property type="project" value="UniProtKB-KW"/>
</dbReference>
<dbReference type="GO" id="GO:0031640">
    <property type="term" value="P:killing of cells of another organism"/>
    <property type="evidence" value="ECO:0007669"/>
    <property type="project" value="UniProtKB-KW"/>
</dbReference>
<dbReference type="CDD" id="cd00206">
    <property type="entry name" value="TFP_snake_toxin"/>
    <property type="match status" value="1"/>
</dbReference>
<dbReference type="FunFam" id="2.10.60.10:FF:000024">
    <property type="entry name" value="Cytotoxin 1"/>
    <property type="match status" value="1"/>
</dbReference>
<dbReference type="Gene3D" id="2.10.60.10">
    <property type="entry name" value="CD59"/>
    <property type="match status" value="1"/>
</dbReference>
<dbReference type="InterPro" id="IPR003572">
    <property type="entry name" value="Cytotoxin_Cobra"/>
</dbReference>
<dbReference type="InterPro" id="IPR003571">
    <property type="entry name" value="Snake_3FTx"/>
</dbReference>
<dbReference type="InterPro" id="IPR045860">
    <property type="entry name" value="Snake_toxin-like_sf"/>
</dbReference>
<dbReference type="InterPro" id="IPR018354">
    <property type="entry name" value="Snake_toxin_con_site"/>
</dbReference>
<dbReference type="InterPro" id="IPR054131">
    <property type="entry name" value="Toxin_cobra-type"/>
</dbReference>
<dbReference type="Pfam" id="PF21947">
    <property type="entry name" value="Toxin_cobra-type"/>
    <property type="match status" value="1"/>
</dbReference>
<dbReference type="PRINTS" id="PR00282">
    <property type="entry name" value="CYTOTOXIN"/>
</dbReference>
<dbReference type="SUPFAM" id="SSF57302">
    <property type="entry name" value="Snake toxin-like"/>
    <property type="match status" value="1"/>
</dbReference>
<dbReference type="PROSITE" id="PS00272">
    <property type="entry name" value="SNAKE_TOXIN"/>
    <property type="match status" value="1"/>
</dbReference>
<evidence type="ECO:0000250" key="1">
    <source>
        <dbReference type="UniProtKB" id="P60301"/>
    </source>
</evidence>
<evidence type="ECO:0000269" key="2">
    <source>
    </source>
</evidence>
<evidence type="ECO:0000303" key="3">
    <source>
    </source>
</evidence>
<evidence type="ECO:0000305" key="4"/>